<gene>
    <name type="ordered locus">BQ2027_MB1570</name>
</gene>
<keyword id="KW-0560">Oxidoreductase</keyword>
<keyword id="KW-1185">Reference proteome</keyword>
<reference key="1">
    <citation type="journal article" date="2003" name="Proc. Natl. Acad. Sci. U.S.A.">
        <title>The complete genome sequence of Mycobacterium bovis.</title>
        <authorList>
            <person name="Garnier T."/>
            <person name="Eiglmeier K."/>
            <person name="Camus J.-C."/>
            <person name="Medina N."/>
            <person name="Mansoor H."/>
            <person name="Pryor M."/>
            <person name="Duthoy S."/>
            <person name="Grondin S."/>
            <person name="Lacroix C."/>
            <person name="Monsempe C."/>
            <person name="Simon S."/>
            <person name="Harris B."/>
            <person name="Atkin R."/>
            <person name="Doggett J."/>
            <person name="Mayes R."/>
            <person name="Keating L."/>
            <person name="Wheeler P.R."/>
            <person name="Parkhill J."/>
            <person name="Barrell B.G."/>
            <person name="Cole S.T."/>
            <person name="Gordon S.V."/>
            <person name="Hewinson R.G."/>
        </authorList>
    </citation>
    <scope>NUCLEOTIDE SEQUENCE [LARGE SCALE GENOMIC DNA]</scope>
    <source>
        <strain>ATCC BAA-935 / AF2122/97</strain>
    </source>
</reference>
<reference key="2">
    <citation type="journal article" date="2017" name="Genome Announc.">
        <title>Updated reference genome sequence and annotation of Mycobacterium bovis AF2122/97.</title>
        <authorList>
            <person name="Malone K.M."/>
            <person name="Farrell D."/>
            <person name="Stuber T.P."/>
            <person name="Schubert O.T."/>
            <person name="Aebersold R."/>
            <person name="Robbe-Austerman S."/>
            <person name="Gordon S.V."/>
        </authorList>
    </citation>
    <scope>NUCLEOTIDE SEQUENCE [LARGE SCALE GENOMIC DNA]</scope>
    <scope>GENOME REANNOTATION</scope>
    <source>
        <strain>ATCC BAA-935 / AF2122/97</strain>
    </source>
</reference>
<sequence length="341" mass="36821">MNLGDLTNFVEKPLAAVSNIVNTPNSAGRYRPFYLRNLLDAVQGRNLNDAVKGKVVLITGGSSGIGAAAAKKIAEAGGTVVLVARTLENLENVANDIRAIRGNGGTAHVYPCDLSDMDAIAVMADQVLGDLGGVDILINNAGRSIRRSLELSYDRIHDYQRTMQLNYLGAVQLILKFIPGMRERHFGHIVNVSSVGVQTRAPRFGAYIASKAALDSLCDALQAETVHDNVRFTTVHMALVRTPMISPTTIYDKFPTLTPDQAAGVITDAIVHRPRRASSPFGQFAAVADAVNPAVMDRVRNRAFNMFGDSSAAKGSESQTDTSELDKRSETFVRATRGIHW</sequence>
<accession>P66780</accession>
<accession>A0A1R3Y0S6</accession>
<accession>Q10783</accession>
<accession>X2BIH0</accession>
<name>Y1570_MYCBO</name>
<feature type="chain" id="PRO_0000054857" description="Uncharacterized oxidoreductase Mb1570">
    <location>
        <begin position="1"/>
        <end position="341"/>
    </location>
</feature>
<feature type="region of interest" description="Disordered" evidence="2">
    <location>
        <begin position="309"/>
        <end position="329"/>
    </location>
</feature>
<feature type="active site" description="Proton acceptor" evidence="1">
    <location>
        <position position="207"/>
    </location>
</feature>
<feature type="binding site" evidence="1">
    <location>
        <begin position="58"/>
        <end position="82"/>
    </location>
    <ligand>
        <name>NADP(+)</name>
        <dbReference type="ChEBI" id="CHEBI:58349"/>
    </ligand>
</feature>
<feature type="binding site" evidence="1">
    <location>
        <position position="194"/>
    </location>
    <ligand>
        <name>substrate</name>
    </ligand>
</feature>
<proteinExistence type="inferred from homology"/>
<comment type="similarity">
    <text evidence="3">Belongs to the short-chain dehydrogenases/reductases (SDR) family.</text>
</comment>
<dbReference type="EC" id="1.-.-.-"/>
<dbReference type="EMBL" id="LT708304">
    <property type="protein sequence ID" value="SIU00173.1"/>
    <property type="molecule type" value="Genomic_DNA"/>
</dbReference>
<dbReference type="RefSeq" id="NP_855222.1">
    <property type="nucleotide sequence ID" value="NC_002945.3"/>
</dbReference>
<dbReference type="RefSeq" id="WP_003407734.1">
    <property type="nucleotide sequence ID" value="NC_002945.4"/>
</dbReference>
<dbReference type="SMR" id="P66780"/>
<dbReference type="KEGG" id="mbo:BQ2027_MB1570"/>
<dbReference type="PATRIC" id="fig|233413.5.peg.1716"/>
<dbReference type="Proteomes" id="UP000001419">
    <property type="component" value="Chromosome"/>
</dbReference>
<dbReference type="GO" id="GO:0016020">
    <property type="term" value="C:membrane"/>
    <property type="evidence" value="ECO:0007669"/>
    <property type="project" value="TreeGrafter"/>
</dbReference>
<dbReference type="GO" id="GO:0016491">
    <property type="term" value="F:oxidoreductase activity"/>
    <property type="evidence" value="ECO:0007669"/>
    <property type="project" value="UniProtKB-KW"/>
</dbReference>
<dbReference type="CDD" id="cd05233">
    <property type="entry name" value="SDR_c"/>
    <property type="match status" value="1"/>
</dbReference>
<dbReference type="FunFam" id="3.40.50.720:FF:000601">
    <property type="entry name" value="Fatty acyl-CoA reductase"/>
    <property type="match status" value="1"/>
</dbReference>
<dbReference type="Gene3D" id="3.40.50.720">
    <property type="entry name" value="NAD(P)-binding Rossmann-like Domain"/>
    <property type="match status" value="1"/>
</dbReference>
<dbReference type="InterPro" id="IPR036291">
    <property type="entry name" value="NAD(P)-bd_dom_sf"/>
</dbReference>
<dbReference type="InterPro" id="IPR002347">
    <property type="entry name" value="SDR_fam"/>
</dbReference>
<dbReference type="PANTHER" id="PTHR44196">
    <property type="entry name" value="DEHYDROGENASE/REDUCTASE SDR FAMILY MEMBER 7B"/>
    <property type="match status" value="1"/>
</dbReference>
<dbReference type="PANTHER" id="PTHR44196:SF1">
    <property type="entry name" value="DEHYDROGENASE_REDUCTASE SDR FAMILY MEMBER 7B"/>
    <property type="match status" value="1"/>
</dbReference>
<dbReference type="Pfam" id="PF00106">
    <property type="entry name" value="adh_short"/>
    <property type="match status" value="1"/>
</dbReference>
<dbReference type="PRINTS" id="PR00081">
    <property type="entry name" value="GDHRDH"/>
</dbReference>
<dbReference type="PRINTS" id="PR00080">
    <property type="entry name" value="SDRFAMILY"/>
</dbReference>
<dbReference type="SMART" id="SM00822">
    <property type="entry name" value="PKS_KR"/>
    <property type="match status" value="1"/>
</dbReference>
<dbReference type="SUPFAM" id="SSF51735">
    <property type="entry name" value="NAD(P)-binding Rossmann-fold domains"/>
    <property type="match status" value="1"/>
</dbReference>
<evidence type="ECO:0000250" key="1"/>
<evidence type="ECO:0000256" key="2">
    <source>
        <dbReference type="SAM" id="MobiDB-lite"/>
    </source>
</evidence>
<evidence type="ECO:0000305" key="3"/>
<protein>
    <recommendedName>
        <fullName>Uncharacterized oxidoreductase Mb1570</fullName>
        <ecNumber>1.-.-.-</ecNumber>
    </recommendedName>
</protein>
<organism>
    <name type="scientific">Mycobacterium bovis (strain ATCC BAA-935 / AF2122/97)</name>
    <dbReference type="NCBI Taxonomy" id="233413"/>
    <lineage>
        <taxon>Bacteria</taxon>
        <taxon>Bacillati</taxon>
        <taxon>Actinomycetota</taxon>
        <taxon>Actinomycetes</taxon>
        <taxon>Mycobacteriales</taxon>
        <taxon>Mycobacteriaceae</taxon>
        <taxon>Mycobacterium</taxon>
        <taxon>Mycobacterium tuberculosis complex</taxon>
    </lineage>
</organism>